<comment type="function">
    <text evidence="1 2">Part of the endoplasmic reticulum membrane protein complex (EMC) that enables the energy-independent insertion into endoplasmic reticulum membranes of newly synthesized membrane proteins. Preferentially accommodates proteins with transmembrane domains that are weakly hydrophobic or contain destabilizing features such as charged and aromatic residues. Involved in the cotranslational insertion of multi-pass membrane proteins in which stop-transfer membrane-anchor sequences become ER membrane spanning helices. It is also required for the post-translational insertion of tail-anchored/TA proteins in endoplasmic reticulum membranes. By mediating the proper cotranslational insertion of N-terminal transmembrane domains in an N-exo topology, with translocated N-terminus in the lumen of the ER, controls the topology of multi-pass membrane proteins like the G protein-coupled receptors (By similarity). By regulating the insertion of various proteins in membranes, it is indirectly involved in many cellular processes. May be involved in Mg(2+) transport (By similarity).</text>
</comment>
<comment type="subunit">
    <text evidence="2">Component of the ER membrane protein complex (EMC).</text>
</comment>
<comment type="subcellular location">
    <subcellularLocation>
        <location evidence="2">Endoplasmic reticulum membrane</location>
        <topology evidence="2">Multi-pass membrane protein</topology>
    </subcellularLocation>
    <subcellularLocation>
        <location evidence="1">Golgi apparatus membrane</location>
        <topology evidence="2">Multi-pass membrane protein</topology>
    </subcellularLocation>
    <subcellularLocation>
        <location evidence="1">Early endosome membrane</location>
        <topology evidence="2">Multi-pass membrane protein</topology>
    </subcellularLocation>
</comment>
<comment type="similarity">
    <text evidence="3">Belongs to the membrane magnesium transporter (TC 1.A.67) family.</text>
</comment>
<proteinExistence type="evidence at transcript level"/>
<dbReference type="EMBL" id="AY394962">
    <property type="protein sequence ID" value="AAQ94589.1"/>
    <property type="molecule type" value="mRNA"/>
</dbReference>
<dbReference type="EMBL" id="BC076369">
    <property type="protein sequence ID" value="AAH76369.1"/>
    <property type="molecule type" value="mRNA"/>
</dbReference>
<dbReference type="RefSeq" id="NP_991162.1">
    <property type="nucleotide sequence ID" value="NM_205599.1"/>
</dbReference>
<dbReference type="SMR" id="Q6TLE4"/>
<dbReference type="FunCoup" id="Q6TLE4">
    <property type="interactions" value="381"/>
</dbReference>
<dbReference type="STRING" id="7955.ENSDARP00000005525"/>
<dbReference type="PaxDb" id="7955-ENSDARP00000005525"/>
<dbReference type="Ensembl" id="ENSDART00000016592">
    <property type="protein sequence ID" value="ENSDARP00000005525"/>
    <property type="gene ID" value="ENSDARG00000010553"/>
</dbReference>
<dbReference type="Ensembl" id="ENSDART00000189931">
    <property type="protein sequence ID" value="ENSDARP00000154905"/>
    <property type="gene ID" value="ENSDARG00000109407"/>
</dbReference>
<dbReference type="GeneID" id="402891"/>
<dbReference type="KEGG" id="dre:402891"/>
<dbReference type="AGR" id="ZFIN:ZDB-GENE-040801-65"/>
<dbReference type="CTD" id="93380"/>
<dbReference type="ZFIN" id="ZDB-GENE-040801-65">
    <property type="gene designation" value="mmgt1"/>
</dbReference>
<dbReference type="eggNOG" id="KOG3918">
    <property type="taxonomic scope" value="Eukaryota"/>
</dbReference>
<dbReference type="HOGENOM" id="CLU_122437_1_0_1"/>
<dbReference type="InParanoid" id="Q6TLE4"/>
<dbReference type="OMA" id="HRGRVMF"/>
<dbReference type="OrthoDB" id="44756at2759"/>
<dbReference type="PhylomeDB" id="Q6TLE4"/>
<dbReference type="TreeFam" id="TF323267"/>
<dbReference type="PRO" id="PR:Q6TLE4"/>
<dbReference type="Proteomes" id="UP000000437">
    <property type="component" value="Alternate scaffold 14"/>
</dbReference>
<dbReference type="Proteomes" id="UP000000437">
    <property type="component" value="Chromosome 14"/>
</dbReference>
<dbReference type="Bgee" id="ENSDARG00000010553">
    <property type="expression patterns" value="Expressed in early embryo and 30 other cell types or tissues"/>
</dbReference>
<dbReference type="ExpressionAtlas" id="Q6TLE4">
    <property type="expression patterns" value="baseline"/>
</dbReference>
<dbReference type="GO" id="GO:0005769">
    <property type="term" value="C:early endosome"/>
    <property type="evidence" value="ECO:0000250"/>
    <property type="project" value="UniProtKB"/>
</dbReference>
<dbReference type="GO" id="GO:0031901">
    <property type="term" value="C:early endosome membrane"/>
    <property type="evidence" value="ECO:0007669"/>
    <property type="project" value="UniProtKB-SubCell"/>
</dbReference>
<dbReference type="GO" id="GO:0072546">
    <property type="term" value="C:EMC complex"/>
    <property type="evidence" value="ECO:0000250"/>
    <property type="project" value="UniProtKB"/>
</dbReference>
<dbReference type="GO" id="GO:0005789">
    <property type="term" value="C:endoplasmic reticulum membrane"/>
    <property type="evidence" value="ECO:0000250"/>
    <property type="project" value="UniProtKB"/>
</dbReference>
<dbReference type="GO" id="GO:0005794">
    <property type="term" value="C:Golgi apparatus"/>
    <property type="evidence" value="ECO:0000250"/>
    <property type="project" value="UniProtKB"/>
</dbReference>
<dbReference type="GO" id="GO:0000139">
    <property type="term" value="C:Golgi membrane"/>
    <property type="evidence" value="ECO:0007669"/>
    <property type="project" value="UniProtKB-SubCell"/>
</dbReference>
<dbReference type="GO" id="GO:0016020">
    <property type="term" value="C:membrane"/>
    <property type="evidence" value="ECO:0000250"/>
    <property type="project" value="UniProtKB"/>
</dbReference>
<dbReference type="GO" id="GO:0005886">
    <property type="term" value="C:plasma membrane"/>
    <property type="evidence" value="ECO:0000318"/>
    <property type="project" value="GO_Central"/>
</dbReference>
<dbReference type="GO" id="GO:0022890">
    <property type="term" value="F:inorganic cation transmembrane transporter activity"/>
    <property type="evidence" value="ECO:0000318"/>
    <property type="project" value="GO_Central"/>
</dbReference>
<dbReference type="GO" id="GO:0015095">
    <property type="term" value="F:magnesium ion transmembrane transporter activity"/>
    <property type="evidence" value="ECO:0000250"/>
    <property type="project" value="UniProtKB"/>
</dbReference>
<dbReference type="GO" id="GO:0015693">
    <property type="term" value="P:magnesium ion transport"/>
    <property type="evidence" value="ECO:0000250"/>
    <property type="project" value="UniProtKB"/>
</dbReference>
<dbReference type="GO" id="GO:0045050">
    <property type="term" value="P:protein insertion into ER membrane by stop-transfer membrane-anchor sequence"/>
    <property type="evidence" value="ECO:0000250"/>
    <property type="project" value="UniProtKB"/>
</dbReference>
<dbReference type="GO" id="GO:0071816">
    <property type="term" value="P:tail-anchored membrane protein insertion into ER membrane"/>
    <property type="evidence" value="ECO:0000250"/>
    <property type="project" value="UniProtKB"/>
</dbReference>
<dbReference type="InterPro" id="IPR018937">
    <property type="entry name" value="MMgT"/>
</dbReference>
<dbReference type="PANTHER" id="PTHR21181">
    <property type="match status" value="1"/>
</dbReference>
<dbReference type="PANTHER" id="PTHR21181:SF7">
    <property type="entry name" value="ER MEMBRANE PROTEIN COMPLEX SUBUNIT 5"/>
    <property type="match status" value="1"/>
</dbReference>
<dbReference type="Pfam" id="PF10270">
    <property type="entry name" value="MMgT"/>
    <property type="match status" value="1"/>
</dbReference>
<organism>
    <name type="scientific">Danio rerio</name>
    <name type="common">Zebrafish</name>
    <name type="synonym">Brachydanio rerio</name>
    <dbReference type="NCBI Taxonomy" id="7955"/>
    <lineage>
        <taxon>Eukaryota</taxon>
        <taxon>Metazoa</taxon>
        <taxon>Chordata</taxon>
        <taxon>Craniata</taxon>
        <taxon>Vertebrata</taxon>
        <taxon>Euteleostomi</taxon>
        <taxon>Actinopterygii</taxon>
        <taxon>Neopterygii</taxon>
        <taxon>Teleostei</taxon>
        <taxon>Ostariophysi</taxon>
        <taxon>Cypriniformes</taxon>
        <taxon>Danionidae</taxon>
        <taxon>Danioninae</taxon>
        <taxon>Danio</taxon>
    </lineage>
</organism>
<accession>Q6TLE4</accession>
<evidence type="ECO:0000250" key="1">
    <source>
        <dbReference type="UniProtKB" id="Q8K273"/>
    </source>
</evidence>
<evidence type="ECO:0000250" key="2">
    <source>
        <dbReference type="UniProtKB" id="Q8N4V1"/>
    </source>
</evidence>
<evidence type="ECO:0000305" key="3"/>
<feature type="chain" id="PRO_0000286438" description="ER membrane protein complex subunit 5">
    <location>
        <begin position="1"/>
        <end position="130"/>
    </location>
</feature>
<feature type="topological domain" description="Cytoplasmic" evidence="2">
    <location>
        <begin position="1"/>
        <end position="3"/>
    </location>
</feature>
<feature type="transmembrane region" description="Helical" evidence="2">
    <location>
        <begin position="4"/>
        <end position="22"/>
    </location>
</feature>
<feature type="topological domain" description="Lumenal" evidence="2">
    <location>
        <begin position="23"/>
        <end position="43"/>
    </location>
</feature>
<feature type="transmembrane region" description="Helical" evidence="2">
    <location>
        <begin position="44"/>
        <end position="63"/>
    </location>
</feature>
<feature type="topological domain" description="Cytoplasmic" evidence="2">
    <location>
        <begin position="64"/>
        <end position="130"/>
    </location>
</feature>
<keyword id="KW-0256">Endoplasmic reticulum</keyword>
<keyword id="KW-0967">Endosome</keyword>
<keyword id="KW-0333">Golgi apparatus</keyword>
<keyword id="KW-0460">Magnesium</keyword>
<keyword id="KW-0472">Membrane</keyword>
<keyword id="KW-1185">Reference proteome</keyword>
<keyword id="KW-0812">Transmembrane</keyword>
<keyword id="KW-1133">Transmembrane helix</keyword>
<keyword id="KW-0813">Transport</keyword>
<sequence>MASSFWKGVVGIGLFALAHAAFSAAQHRSYMRLTEKENETLPIDIVLQTLLSFVITCYGIVHISGEFKDMDASSELKNKTFDTLRNHPSFYLFNHRGRVLFRTPEQEPSTPNAQALPSNPLRLRKLENFH</sequence>
<reference key="1">
    <citation type="journal article" date="2004" name="Proc. Natl. Acad. Sci. U.S.A.">
        <title>Hematopoietic gene expression profile in zebrafish kidney marrow.</title>
        <authorList>
            <person name="Song H.-D."/>
            <person name="Sun X.-J."/>
            <person name="Deng M."/>
            <person name="Zhang G.-W."/>
            <person name="Zhou Y."/>
            <person name="Wu X.-Y."/>
            <person name="Sheng Y."/>
            <person name="Chen Y."/>
            <person name="Ruan Z."/>
            <person name="Jiang C.-L."/>
            <person name="Fan H.-Y."/>
            <person name="Zon L.I."/>
            <person name="Kanki J.P."/>
            <person name="Liu T.X."/>
            <person name="Look A.T."/>
            <person name="Chen Z."/>
        </authorList>
    </citation>
    <scope>NUCLEOTIDE SEQUENCE [LARGE SCALE MRNA]</scope>
    <source>
        <tissue>Kidney marrow</tissue>
    </source>
</reference>
<reference key="2">
    <citation type="submission" date="2004-07" db="EMBL/GenBank/DDBJ databases">
        <authorList>
            <consortium name="NIH - Zebrafish Gene Collection (ZGC) project"/>
        </authorList>
    </citation>
    <scope>NUCLEOTIDE SEQUENCE [LARGE SCALE MRNA]</scope>
    <source>
        <tissue>Brain</tissue>
    </source>
</reference>
<gene>
    <name evidence="1" type="primary">mmgt1</name>
    <name evidence="2" type="synonym">emc5</name>
    <name type="ORF">zgc:92918</name>
</gene>
<protein>
    <recommendedName>
        <fullName evidence="2">ER membrane protein complex subunit 5</fullName>
    </recommendedName>
    <alternativeName>
        <fullName evidence="1">Membrane magnesium transporter 1</fullName>
    </alternativeName>
</protein>
<name>EMC5_DANRE</name>